<protein>
    <recommendedName>
        <fullName>Sideroflexin-1</fullName>
    </recommendedName>
</protein>
<proteinExistence type="evidence at transcript level"/>
<accession>Q5E9M8</accession>
<gene>
    <name type="primary">SFXN1</name>
</gene>
<reference key="1">
    <citation type="journal article" date="2005" name="BMC Genomics">
        <title>Characterization of 954 bovine full-CDS cDNA sequences.</title>
        <authorList>
            <person name="Harhay G.P."/>
            <person name="Sonstegard T.S."/>
            <person name="Keele J.W."/>
            <person name="Heaton M.P."/>
            <person name="Clawson M.L."/>
            <person name="Snelling W.M."/>
            <person name="Wiedmann R.T."/>
            <person name="Van Tassell C.P."/>
            <person name="Smith T.P.L."/>
        </authorList>
    </citation>
    <scope>NUCLEOTIDE SEQUENCE [LARGE SCALE MRNA]</scope>
</reference>
<reference key="2">
    <citation type="submission" date="2005-08" db="EMBL/GenBank/DDBJ databases">
        <authorList>
            <consortium name="NIH - Mammalian Gene Collection (MGC) project"/>
        </authorList>
    </citation>
    <scope>NUCLEOTIDE SEQUENCE [LARGE SCALE MRNA]</scope>
    <source>
        <strain>Hereford</strain>
        <tissue>Hypothalamus</tissue>
    </source>
</reference>
<organism>
    <name type="scientific">Bos taurus</name>
    <name type="common">Bovine</name>
    <dbReference type="NCBI Taxonomy" id="9913"/>
    <lineage>
        <taxon>Eukaryota</taxon>
        <taxon>Metazoa</taxon>
        <taxon>Chordata</taxon>
        <taxon>Craniata</taxon>
        <taxon>Vertebrata</taxon>
        <taxon>Euteleostomi</taxon>
        <taxon>Mammalia</taxon>
        <taxon>Eutheria</taxon>
        <taxon>Laurasiatheria</taxon>
        <taxon>Artiodactyla</taxon>
        <taxon>Ruminantia</taxon>
        <taxon>Pecora</taxon>
        <taxon>Bovidae</taxon>
        <taxon>Bovinae</taxon>
        <taxon>Bos</taxon>
    </lineage>
</organism>
<feature type="initiator methionine" description="Removed" evidence="1">
    <location>
        <position position="1"/>
    </location>
</feature>
<feature type="chain" id="PRO_0000247974" description="Sideroflexin-1">
    <location>
        <begin position="2"/>
        <end position="322"/>
    </location>
</feature>
<feature type="topological domain" description="Mitochondrial matrix" evidence="1">
    <location>
        <begin position="2"/>
        <end position="102"/>
    </location>
</feature>
<feature type="transmembrane region" description="Helical" evidence="2">
    <location>
        <begin position="103"/>
        <end position="120"/>
    </location>
</feature>
<feature type="topological domain" description="Mitochondrial intermembrane" evidence="3">
    <location>
        <begin position="121"/>
        <end position="146"/>
    </location>
</feature>
<feature type="transmembrane region" description="Helical" evidence="2">
    <location>
        <begin position="147"/>
        <end position="167"/>
    </location>
</feature>
<feature type="topological domain" description="Mitochondrial matrix" evidence="3">
    <location>
        <begin position="168"/>
        <end position="174"/>
    </location>
</feature>
<feature type="transmembrane region" description="Helical" evidence="2">
    <location>
        <begin position="175"/>
        <end position="195"/>
    </location>
</feature>
<feature type="topological domain" description="Mitochondrial intermembrane" evidence="3">
    <location>
        <begin position="196"/>
        <end position="228"/>
    </location>
</feature>
<feature type="transmembrane region" description="Helical" evidence="2">
    <location>
        <begin position="229"/>
        <end position="249"/>
    </location>
</feature>
<feature type="topological domain" description="Mitochondrial matrix" evidence="3">
    <location>
        <begin position="250"/>
        <end position="266"/>
    </location>
</feature>
<feature type="transmembrane region" description="Helical" evidence="2">
    <location>
        <begin position="267"/>
        <end position="287"/>
    </location>
</feature>
<feature type="topological domain" description="Mitochondrial intermembrane" evidence="1">
    <location>
        <begin position="288"/>
        <end position="322"/>
    </location>
</feature>
<feature type="modified residue" description="N-acetylserine" evidence="1">
    <location>
        <position position="2"/>
    </location>
</feature>
<dbReference type="EMBL" id="BT020892">
    <property type="protein sequence ID" value="AAX08909.1"/>
    <property type="molecule type" value="mRNA"/>
</dbReference>
<dbReference type="EMBL" id="BC103181">
    <property type="protein sequence ID" value="AAI03182.1"/>
    <property type="molecule type" value="mRNA"/>
</dbReference>
<dbReference type="RefSeq" id="NP_001015574.1">
    <property type="nucleotide sequence ID" value="NM_001015574.1"/>
</dbReference>
<dbReference type="FunCoup" id="Q5E9M8">
    <property type="interactions" value="1328"/>
</dbReference>
<dbReference type="STRING" id="9913.ENSBTAP00000068533"/>
<dbReference type="PaxDb" id="9913-ENSBTAP00000019322"/>
<dbReference type="PeptideAtlas" id="Q5E9M8"/>
<dbReference type="GeneID" id="511375"/>
<dbReference type="KEGG" id="bta:511375"/>
<dbReference type="CTD" id="94081"/>
<dbReference type="VEuPathDB" id="HostDB:ENSBTAG00000014536"/>
<dbReference type="eggNOG" id="KOG3767">
    <property type="taxonomic scope" value="Eukaryota"/>
</dbReference>
<dbReference type="HOGENOM" id="CLU_039425_1_0_1"/>
<dbReference type="InParanoid" id="Q5E9M8"/>
<dbReference type="OMA" id="GRVRHCA"/>
<dbReference type="OrthoDB" id="6608471at2759"/>
<dbReference type="TreeFam" id="TF313205"/>
<dbReference type="Proteomes" id="UP000009136">
    <property type="component" value="Chromosome 10"/>
</dbReference>
<dbReference type="Bgee" id="ENSBTAG00000014536">
    <property type="expression patterns" value="Expressed in liver and 102 other cell types or tissues"/>
</dbReference>
<dbReference type="GO" id="GO:0005743">
    <property type="term" value="C:mitochondrial inner membrane"/>
    <property type="evidence" value="ECO:0000250"/>
    <property type="project" value="UniProtKB"/>
</dbReference>
<dbReference type="GO" id="GO:0015180">
    <property type="term" value="F:L-alanine transmembrane transporter activity"/>
    <property type="evidence" value="ECO:0000250"/>
    <property type="project" value="UniProtKB"/>
</dbReference>
<dbReference type="GO" id="GO:0015194">
    <property type="term" value="F:L-serine transmembrane transporter activity"/>
    <property type="evidence" value="ECO:0000250"/>
    <property type="project" value="UniProtKB"/>
</dbReference>
<dbReference type="GO" id="GO:0015075">
    <property type="term" value="F:monoatomic ion transmembrane transporter activity"/>
    <property type="evidence" value="ECO:0007669"/>
    <property type="project" value="InterPro"/>
</dbReference>
<dbReference type="GO" id="GO:0022857">
    <property type="term" value="F:transmembrane transporter activity"/>
    <property type="evidence" value="ECO:0000318"/>
    <property type="project" value="GO_Central"/>
</dbReference>
<dbReference type="GO" id="GO:0015808">
    <property type="term" value="P:L-alanine transport"/>
    <property type="evidence" value="ECO:0000250"/>
    <property type="project" value="UniProtKB"/>
</dbReference>
<dbReference type="GO" id="GO:0015825">
    <property type="term" value="P:L-serine transport"/>
    <property type="evidence" value="ECO:0000250"/>
    <property type="project" value="UniProtKB"/>
</dbReference>
<dbReference type="GO" id="GO:0006730">
    <property type="term" value="P:one-carbon metabolic process"/>
    <property type="evidence" value="ECO:0000250"/>
    <property type="project" value="UniProtKB"/>
</dbReference>
<dbReference type="GO" id="GO:0140300">
    <property type="term" value="P:serine import into mitochondrion"/>
    <property type="evidence" value="ECO:0000250"/>
    <property type="project" value="UniProtKB"/>
</dbReference>
<dbReference type="InterPro" id="IPR004686">
    <property type="entry name" value="Mtc"/>
</dbReference>
<dbReference type="NCBIfam" id="TIGR00798">
    <property type="entry name" value="mtc"/>
    <property type="match status" value="1"/>
</dbReference>
<dbReference type="PANTHER" id="PTHR11153">
    <property type="entry name" value="SIDEROFLEXIN"/>
    <property type="match status" value="1"/>
</dbReference>
<dbReference type="PANTHER" id="PTHR11153:SF8">
    <property type="entry name" value="SIDEROFLEXIN-1"/>
    <property type="match status" value="1"/>
</dbReference>
<dbReference type="Pfam" id="PF03820">
    <property type="entry name" value="SFXNs"/>
    <property type="match status" value="1"/>
</dbReference>
<evidence type="ECO:0000250" key="1">
    <source>
        <dbReference type="UniProtKB" id="Q9H9B4"/>
    </source>
</evidence>
<evidence type="ECO:0000255" key="2"/>
<evidence type="ECO:0000305" key="3"/>
<name>SFXN1_BOVIN</name>
<keyword id="KW-0007">Acetylation</keyword>
<keyword id="KW-0029">Amino-acid transport</keyword>
<keyword id="KW-0472">Membrane</keyword>
<keyword id="KW-0496">Mitochondrion</keyword>
<keyword id="KW-0999">Mitochondrion inner membrane</keyword>
<keyword id="KW-0554">One-carbon metabolism</keyword>
<keyword id="KW-1185">Reference proteome</keyword>
<keyword id="KW-0812">Transmembrane</keyword>
<keyword id="KW-1133">Transmembrane helix</keyword>
<keyword id="KW-0813">Transport</keyword>
<comment type="function">
    <text evidence="1">Amino acid transporter importing serine, an essential substrate of the mitochondrial branch of the one-carbon pathway, into mitochondria. Mitochondrial serine is then converted to glycine and formate, which exits to the cytosol where it is used to generate the charged folates that serve as one-carbon donors. May also transport other amino acids including alanine and cysteine.</text>
</comment>
<comment type="catalytic activity">
    <reaction evidence="1">
        <text>L-serine(in) = L-serine(out)</text>
        <dbReference type="Rhea" id="RHEA:35031"/>
        <dbReference type="ChEBI" id="CHEBI:33384"/>
    </reaction>
</comment>
<comment type="catalytic activity">
    <reaction evidence="1">
        <text>L-alanine(in) = L-alanine(out)</text>
        <dbReference type="Rhea" id="RHEA:70719"/>
        <dbReference type="ChEBI" id="CHEBI:57972"/>
    </reaction>
</comment>
<comment type="catalytic activity">
    <reaction evidence="1">
        <text>L-cysteine(in) = L-cysteine(out)</text>
        <dbReference type="Rhea" id="RHEA:29655"/>
        <dbReference type="ChEBI" id="CHEBI:35235"/>
    </reaction>
</comment>
<comment type="subcellular location">
    <subcellularLocation>
        <location evidence="1">Mitochondrion inner membrane</location>
        <topology evidence="2">Multi-pass membrane protein</topology>
    </subcellularLocation>
</comment>
<comment type="similarity">
    <text evidence="3">Belongs to the sideroflexin family.</text>
</comment>
<sequence length="322" mass="35690">MSGELPPNINIKEPRWDQSTFIGRAKHFFTVTDPRNILLTNEQLEAARKVVHDYRQGIIPSGLTENELWRAKYIYDSAFHPDTGEKMILIGRMSAQVPMNMTITGCMMTFYRTTPAVLFWQWINQSFNAVVNYTNRSGDAPLTVNELGTAYVSATTGAVATALGLNALTKHVSPLIGRFVPFAAVAAANCINIPLMRQRELKVGIPVTDENGNRLGESANAAKQAITQVVVSRILMAAPGMAIPPFIMNTLEKKAFLKRFPWMSAPVQVGIVGFCLVFATPLCCALFPQKSSMSVTSLEAELQARIRETYPELRRVYFNKGL</sequence>